<name>RL6_SPHAL</name>
<accession>Q1GPB4</accession>
<dbReference type="EMBL" id="CP000356">
    <property type="protein sequence ID" value="ABF54508.1"/>
    <property type="molecule type" value="Genomic_DNA"/>
</dbReference>
<dbReference type="RefSeq" id="WP_011543073.1">
    <property type="nucleotide sequence ID" value="NC_008048.1"/>
</dbReference>
<dbReference type="SMR" id="Q1GPB4"/>
<dbReference type="STRING" id="317655.Sala_2803"/>
<dbReference type="KEGG" id="sal:Sala_2803"/>
<dbReference type="eggNOG" id="COG0097">
    <property type="taxonomic scope" value="Bacteria"/>
</dbReference>
<dbReference type="HOGENOM" id="CLU_065464_1_2_5"/>
<dbReference type="OrthoDB" id="9805007at2"/>
<dbReference type="Proteomes" id="UP000006578">
    <property type="component" value="Chromosome"/>
</dbReference>
<dbReference type="GO" id="GO:0022625">
    <property type="term" value="C:cytosolic large ribosomal subunit"/>
    <property type="evidence" value="ECO:0007669"/>
    <property type="project" value="TreeGrafter"/>
</dbReference>
<dbReference type="GO" id="GO:0019843">
    <property type="term" value="F:rRNA binding"/>
    <property type="evidence" value="ECO:0007669"/>
    <property type="project" value="UniProtKB-UniRule"/>
</dbReference>
<dbReference type="GO" id="GO:0003735">
    <property type="term" value="F:structural constituent of ribosome"/>
    <property type="evidence" value="ECO:0007669"/>
    <property type="project" value="InterPro"/>
</dbReference>
<dbReference type="GO" id="GO:0002181">
    <property type="term" value="P:cytoplasmic translation"/>
    <property type="evidence" value="ECO:0007669"/>
    <property type="project" value="TreeGrafter"/>
</dbReference>
<dbReference type="FunFam" id="3.90.930.12:FF:000001">
    <property type="entry name" value="50S ribosomal protein L6"/>
    <property type="match status" value="1"/>
</dbReference>
<dbReference type="FunFam" id="3.90.930.12:FF:000002">
    <property type="entry name" value="50S ribosomal protein L6"/>
    <property type="match status" value="1"/>
</dbReference>
<dbReference type="Gene3D" id="3.90.930.12">
    <property type="entry name" value="Ribosomal protein L6, alpha-beta domain"/>
    <property type="match status" value="2"/>
</dbReference>
<dbReference type="HAMAP" id="MF_01365_B">
    <property type="entry name" value="Ribosomal_uL6_B"/>
    <property type="match status" value="1"/>
</dbReference>
<dbReference type="InterPro" id="IPR000702">
    <property type="entry name" value="Ribosomal_uL6-like"/>
</dbReference>
<dbReference type="InterPro" id="IPR036789">
    <property type="entry name" value="Ribosomal_uL6-like_a/b-dom_sf"/>
</dbReference>
<dbReference type="InterPro" id="IPR020040">
    <property type="entry name" value="Ribosomal_uL6_a/b-dom"/>
</dbReference>
<dbReference type="InterPro" id="IPR019906">
    <property type="entry name" value="Ribosomal_uL6_bac-type"/>
</dbReference>
<dbReference type="InterPro" id="IPR002358">
    <property type="entry name" value="Ribosomal_uL6_CS"/>
</dbReference>
<dbReference type="NCBIfam" id="TIGR03654">
    <property type="entry name" value="L6_bact"/>
    <property type="match status" value="1"/>
</dbReference>
<dbReference type="PANTHER" id="PTHR11655">
    <property type="entry name" value="60S/50S RIBOSOMAL PROTEIN L6/L9"/>
    <property type="match status" value="1"/>
</dbReference>
<dbReference type="PANTHER" id="PTHR11655:SF14">
    <property type="entry name" value="LARGE RIBOSOMAL SUBUNIT PROTEIN UL6M"/>
    <property type="match status" value="1"/>
</dbReference>
<dbReference type="Pfam" id="PF00347">
    <property type="entry name" value="Ribosomal_L6"/>
    <property type="match status" value="2"/>
</dbReference>
<dbReference type="PIRSF" id="PIRSF002162">
    <property type="entry name" value="Ribosomal_L6"/>
    <property type="match status" value="1"/>
</dbReference>
<dbReference type="PRINTS" id="PR00059">
    <property type="entry name" value="RIBOSOMALL6"/>
</dbReference>
<dbReference type="SUPFAM" id="SSF56053">
    <property type="entry name" value="Ribosomal protein L6"/>
    <property type="match status" value="2"/>
</dbReference>
<dbReference type="PROSITE" id="PS00525">
    <property type="entry name" value="RIBOSOMAL_L6_1"/>
    <property type="match status" value="1"/>
</dbReference>
<gene>
    <name evidence="1" type="primary">rplF</name>
    <name type="ordered locus">Sala_2803</name>
</gene>
<keyword id="KW-1185">Reference proteome</keyword>
<keyword id="KW-0687">Ribonucleoprotein</keyword>
<keyword id="KW-0689">Ribosomal protein</keyword>
<keyword id="KW-0694">RNA-binding</keyword>
<keyword id="KW-0699">rRNA-binding</keyword>
<proteinExistence type="inferred from homology"/>
<comment type="function">
    <text evidence="1">This protein binds to the 23S rRNA, and is important in its secondary structure. It is located near the subunit interface in the base of the L7/L12 stalk, and near the tRNA binding site of the peptidyltransferase center.</text>
</comment>
<comment type="subunit">
    <text evidence="1">Part of the 50S ribosomal subunit.</text>
</comment>
<comment type="similarity">
    <text evidence="1">Belongs to the universal ribosomal protein uL6 family.</text>
</comment>
<evidence type="ECO:0000255" key="1">
    <source>
        <dbReference type="HAMAP-Rule" id="MF_01365"/>
    </source>
</evidence>
<evidence type="ECO:0000305" key="2"/>
<sequence>MSRIGKKAVEIPSGVTAAIDGGQLSVKGPKGTLAMSLSDNIKYEVGDGSISVQPANDSREARAFWGMQRTLVQNLVTGVTEGFTKVLEITGVGYRANAQGKNLKLQLGYSHDVDFAVPDGIEIKTPDNTTIEISGIDKQQVGQVAAEIRRWRKPEPYKGKGIKYRGEYIFRKEGKKK</sequence>
<reference key="1">
    <citation type="journal article" date="2009" name="Proc. Natl. Acad. Sci. U.S.A.">
        <title>The genomic basis of trophic strategy in marine bacteria.</title>
        <authorList>
            <person name="Lauro F.M."/>
            <person name="McDougald D."/>
            <person name="Thomas T."/>
            <person name="Williams T.J."/>
            <person name="Egan S."/>
            <person name="Rice S."/>
            <person name="DeMaere M.Z."/>
            <person name="Ting L."/>
            <person name="Ertan H."/>
            <person name="Johnson J."/>
            <person name="Ferriera S."/>
            <person name="Lapidus A."/>
            <person name="Anderson I."/>
            <person name="Kyrpides N."/>
            <person name="Munk A.C."/>
            <person name="Detter C."/>
            <person name="Han C.S."/>
            <person name="Brown M.V."/>
            <person name="Robb F.T."/>
            <person name="Kjelleberg S."/>
            <person name="Cavicchioli R."/>
        </authorList>
    </citation>
    <scope>NUCLEOTIDE SEQUENCE [LARGE SCALE GENOMIC DNA]</scope>
    <source>
        <strain>DSM 13593 / LMG 18877 / RB2256</strain>
    </source>
</reference>
<protein>
    <recommendedName>
        <fullName evidence="1">Large ribosomal subunit protein uL6</fullName>
    </recommendedName>
    <alternativeName>
        <fullName evidence="2">50S ribosomal protein L6</fullName>
    </alternativeName>
</protein>
<feature type="chain" id="PRO_0000265302" description="Large ribosomal subunit protein uL6">
    <location>
        <begin position="1"/>
        <end position="177"/>
    </location>
</feature>
<organism>
    <name type="scientific">Sphingopyxis alaskensis (strain DSM 13593 / LMG 18877 / RB2256)</name>
    <name type="common">Sphingomonas alaskensis</name>
    <dbReference type="NCBI Taxonomy" id="317655"/>
    <lineage>
        <taxon>Bacteria</taxon>
        <taxon>Pseudomonadati</taxon>
        <taxon>Pseudomonadota</taxon>
        <taxon>Alphaproteobacteria</taxon>
        <taxon>Sphingomonadales</taxon>
        <taxon>Sphingomonadaceae</taxon>
        <taxon>Sphingopyxis</taxon>
    </lineage>
</organism>